<dbReference type="EMBL" id="CP000857">
    <property type="protein sequence ID" value="ACN48033.1"/>
    <property type="molecule type" value="Genomic_DNA"/>
</dbReference>
<dbReference type="RefSeq" id="WP_000102338.1">
    <property type="nucleotide sequence ID" value="NC_012125.1"/>
</dbReference>
<dbReference type="KEGG" id="sei:SPC_3965"/>
<dbReference type="HOGENOM" id="CLU_008142_4_2_6"/>
<dbReference type="Proteomes" id="UP000001599">
    <property type="component" value="Chromosome"/>
</dbReference>
<dbReference type="GO" id="GO:0005886">
    <property type="term" value="C:plasma membrane"/>
    <property type="evidence" value="ECO:0007669"/>
    <property type="project" value="UniProtKB-SubCell"/>
</dbReference>
<dbReference type="GO" id="GO:0015079">
    <property type="term" value="F:potassium ion transmembrane transporter activity"/>
    <property type="evidence" value="ECO:0007669"/>
    <property type="project" value="UniProtKB-UniRule"/>
</dbReference>
<dbReference type="GO" id="GO:0015293">
    <property type="term" value="F:symporter activity"/>
    <property type="evidence" value="ECO:0007669"/>
    <property type="project" value="UniProtKB-UniRule"/>
</dbReference>
<dbReference type="HAMAP" id="MF_01522">
    <property type="entry name" value="Kup"/>
    <property type="match status" value="1"/>
</dbReference>
<dbReference type="InterPro" id="IPR003855">
    <property type="entry name" value="K+_transporter"/>
</dbReference>
<dbReference type="InterPro" id="IPR053952">
    <property type="entry name" value="K_trans_C"/>
</dbReference>
<dbReference type="InterPro" id="IPR053951">
    <property type="entry name" value="K_trans_N"/>
</dbReference>
<dbReference type="InterPro" id="IPR023051">
    <property type="entry name" value="Kup"/>
</dbReference>
<dbReference type="NCBIfam" id="TIGR00794">
    <property type="entry name" value="kup"/>
    <property type="match status" value="1"/>
</dbReference>
<dbReference type="NCBIfam" id="NF008015">
    <property type="entry name" value="PRK10745.1"/>
    <property type="match status" value="1"/>
</dbReference>
<dbReference type="PANTHER" id="PTHR30540:SF79">
    <property type="entry name" value="LOW AFFINITY POTASSIUM TRANSPORT SYSTEM PROTEIN KUP"/>
    <property type="match status" value="1"/>
</dbReference>
<dbReference type="PANTHER" id="PTHR30540">
    <property type="entry name" value="OSMOTIC STRESS POTASSIUM TRANSPORTER"/>
    <property type="match status" value="1"/>
</dbReference>
<dbReference type="Pfam" id="PF02705">
    <property type="entry name" value="K_trans"/>
    <property type="match status" value="1"/>
</dbReference>
<dbReference type="Pfam" id="PF22776">
    <property type="entry name" value="K_trans_C"/>
    <property type="match status" value="1"/>
</dbReference>
<reference key="1">
    <citation type="journal article" date="2009" name="PLoS ONE">
        <title>Salmonella paratyphi C: genetic divergence from Salmonella choleraesuis and pathogenic convergence with Salmonella typhi.</title>
        <authorList>
            <person name="Liu W.-Q."/>
            <person name="Feng Y."/>
            <person name="Wang Y."/>
            <person name="Zou Q.-H."/>
            <person name="Chen F."/>
            <person name="Guo J.-T."/>
            <person name="Peng Y.-H."/>
            <person name="Jin Y."/>
            <person name="Li Y.-G."/>
            <person name="Hu S.-N."/>
            <person name="Johnston R.N."/>
            <person name="Liu G.-R."/>
            <person name="Liu S.-L."/>
        </authorList>
    </citation>
    <scope>NUCLEOTIDE SEQUENCE [LARGE SCALE GENOMIC DNA]</scope>
    <source>
        <strain>RKS4594</strain>
    </source>
</reference>
<name>KUP_SALPC</name>
<organism>
    <name type="scientific">Salmonella paratyphi C (strain RKS4594)</name>
    <dbReference type="NCBI Taxonomy" id="476213"/>
    <lineage>
        <taxon>Bacteria</taxon>
        <taxon>Pseudomonadati</taxon>
        <taxon>Pseudomonadota</taxon>
        <taxon>Gammaproteobacteria</taxon>
        <taxon>Enterobacterales</taxon>
        <taxon>Enterobacteriaceae</taxon>
        <taxon>Salmonella</taxon>
    </lineage>
</organism>
<protein>
    <recommendedName>
        <fullName evidence="1">Low affinity potassium transport system protein Kup</fullName>
    </recommendedName>
    <alternativeName>
        <fullName evidence="1">Kup system potassium uptake protein</fullName>
    </alternativeName>
</protein>
<proteinExistence type="inferred from homology"/>
<accession>C0Q2P7</accession>
<keyword id="KW-0997">Cell inner membrane</keyword>
<keyword id="KW-1003">Cell membrane</keyword>
<keyword id="KW-0406">Ion transport</keyword>
<keyword id="KW-0472">Membrane</keyword>
<keyword id="KW-0630">Potassium</keyword>
<keyword id="KW-0633">Potassium transport</keyword>
<keyword id="KW-0769">Symport</keyword>
<keyword id="KW-0812">Transmembrane</keyword>
<keyword id="KW-1133">Transmembrane helix</keyword>
<keyword id="KW-0813">Transport</keyword>
<comment type="function">
    <text evidence="1">Responsible for the low-affinity transport of potassium into the cell. Likely operates as a K(+):H(+) symporter.</text>
</comment>
<comment type="catalytic activity">
    <reaction evidence="1">
        <text>K(+)(in) + H(+)(in) = K(+)(out) + H(+)(out)</text>
        <dbReference type="Rhea" id="RHEA:28490"/>
        <dbReference type="ChEBI" id="CHEBI:15378"/>
        <dbReference type="ChEBI" id="CHEBI:29103"/>
    </reaction>
    <physiologicalReaction direction="right-to-left" evidence="1">
        <dbReference type="Rhea" id="RHEA:28492"/>
    </physiologicalReaction>
</comment>
<comment type="subcellular location">
    <subcellularLocation>
        <location evidence="1">Cell inner membrane</location>
        <topology evidence="1">Multi-pass membrane protein</topology>
    </subcellularLocation>
</comment>
<comment type="similarity">
    <text evidence="1">Belongs to the HAK/KUP transporter (TC 2.A.72) family.</text>
</comment>
<gene>
    <name evidence="1" type="primary">kup</name>
    <name type="ordered locus">SPC_3965</name>
</gene>
<sequence>MSTDNKQSLPAITLAAIGVVYGDIGTSPLYTLRECLSGQFGFGVERDAVFGFLSLIFWLLIFVVSIKYLTFVMRADNAGEGGILTLMSLAGRNTSARTTSMLVIMGLIGGSFFYGEVVITPAISVMSAIEGLEIVAPQLDTWIVPLSIIVLTLLFMIQKHGTGMVGKLFAPIMLTWFLILAVLGLRSIIANPEVLHALNPVWAVRFFLEYKTVSFIALGAVVLSITGVEALYADMGHFGKFPIRLAWFTVVLPSLVLNYFGQGALLLKHPEAIKNPFFLLAPDWALIPLLILAALATVIASQAVISGVFSLTRQAVRLGYLSPMRIIHTSEMESGQIYIPFVNWLLYFAVVVVIVSFEHSSNLAAAYGIAVTGTMVLTSILSTTVARKNWHWNKYFVALILIAFLCVDIPLFSANLDKLLSGGWLPLSLGLIMFTIMTTWKSERFRLLRRMHEHGNSLEAMIASLEKSPPVRVPGTAVYMSRALSVIPFALLHNLKHNKVLHERVILLTLRTEDAPYVHNVRRVQIEQLSPTFWRVVASYGWRETPNVEEVFHRCGLEGLSCRMMETSFFMSHESLIVGKRPWYLRLRGKLYLLLQRNALRAPDQFEIPPNRVIELGTQVEI</sequence>
<feature type="chain" id="PRO_1000185119" description="Low affinity potassium transport system protein Kup">
    <location>
        <begin position="1"/>
        <end position="622"/>
    </location>
</feature>
<feature type="transmembrane region" description="Helical" evidence="1">
    <location>
        <begin position="9"/>
        <end position="29"/>
    </location>
</feature>
<feature type="transmembrane region" description="Helical" evidence="1">
    <location>
        <begin position="49"/>
        <end position="69"/>
    </location>
</feature>
<feature type="transmembrane region" description="Helical" evidence="1">
    <location>
        <begin position="103"/>
        <end position="123"/>
    </location>
</feature>
<feature type="transmembrane region" description="Helical" evidence="1">
    <location>
        <begin position="137"/>
        <end position="157"/>
    </location>
</feature>
<feature type="transmembrane region" description="Helical" evidence="1">
    <location>
        <begin position="165"/>
        <end position="185"/>
    </location>
</feature>
<feature type="transmembrane region" description="Helical" evidence="1">
    <location>
        <begin position="213"/>
        <end position="233"/>
    </location>
</feature>
<feature type="transmembrane region" description="Helical" evidence="1">
    <location>
        <begin position="247"/>
        <end position="267"/>
    </location>
</feature>
<feature type="transmembrane region" description="Helical" evidence="1">
    <location>
        <begin position="276"/>
        <end position="296"/>
    </location>
</feature>
<feature type="transmembrane region" description="Helical" evidence="1">
    <location>
        <begin position="337"/>
        <end position="357"/>
    </location>
</feature>
<feature type="transmembrane region" description="Helical" evidence="1">
    <location>
        <begin position="363"/>
        <end position="383"/>
    </location>
</feature>
<feature type="transmembrane region" description="Helical" evidence="1">
    <location>
        <begin position="396"/>
        <end position="416"/>
    </location>
</feature>
<feature type="transmembrane region" description="Helical" evidence="1">
    <location>
        <begin position="419"/>
        <end position="439"/>
    </location>
</feature>
<evidence type="ECO:0000255" key="1">
    <source>
        <dbReference type="HAMAP-Rule" id="MF_01522"/>
    </source>
</evidence>